<proteinExistence type="inferred from homology"/>
<keyword id="KW-0028">Amino-acid biosynthesis</keyword>
<keyword id="KW-0057">Aromatic amino acid biosynthesis</keyword>
<keyword id="KW-0456">Lyase</keyword>
<keyword id="KW-1185">Reference proteome</keyword>
<keyword id="KW-0822">Tryptophan biosynthesis</keyword>
<reference key="1">
    <citation type="journal article" date="2009" name="PLoS Genet.">
        <title>Organised genome dynamics in the Escherichia coli species results in highly diverse adaptive paths.</title>
        <authorList>
            <person name="Touchon M."/>
            <person name="Hoede C."/>
            <person name="Tenaillon O."/>
            <person name="Barbe V."/>
            <person name="Baeriswyl S."/>
            <person name="Bidet P."/>
            <person name="Bingen E."/>
            <person name="Bonacorsi S."/>
            <person name="Bouchier C."/>
            <person name="Bouvet O."/>
            <person name="Calteau A."/>
            <person name="Chiapello H."/>
            <person name="Clermont O."/>
            <person name="Cruveiller S."/>
            <person name="Danchin A."/>
            <person name="Diard M."/>
            <person name="Dossat C."/>
            <person name="Karoui M.E."/>
            <person name="Frapy E."/>
            <person name="Garry L."/>
            <person name="Ghigo J.M."/>
            <person name="Gilles A.M."/>
            <person name="Johnson J."/>
            <person name="Le Bouguenec C."/>
            <person name="Lescat M."/>
            <person name="Mangenot S."/>
            <person name="Martinez-Jehanne V."/>
            <person name="Matic I."/>
            <person name="Nassif X."/>
            <person name="Oztas S."/>
            <person name="Petit M.A."/>
            <person name="Pichon C."/>
            <person name="Rouy Z."/>
            <person name="Ruf C.S."/>
            <person name="Schneider D."/>
            <person name="Tourret J."/>
            <person name="Vacherie B."/>
            <person name="Vallenet D."/>
            <person name="Medigue C."/>
            <person name="Rocha E.P.C."/>
            <person name="Denamur E."/>
        </authorList>
    </citation>
    <scope>NUCLEOTIDE SEQUENCE [LARGE SCALE GENOMIC DNA]</scope>
    <source>
        <strain>55989 / EAEC</strain>
    </source>
</reference>
<gene>
    <name evidence="1" type="primary">trpA</name>
    <name type="ordered locus">EC55989_1418</name>
</gene>
<dbReference type="EC" id="4.2.1.20" evidence="1"/>
<dbReference type="EMBL" id="CU928145">
    <property type="protein sequence ID" value="CAU97275.1"/>
    <property type="molecule type" value="Genomic_DNA"/>
</dbReference>
<dbReference type="RefSeq" id="WP_000443069.1">
    <property type="nucleotide sequence ID" value="NC_011748.1"/>
</dbReference>
<dbReference type="SMR" id="B7L492"/>
<dbReference type="KEGG" id="eck:EC55989_1418"/>
<dbReference type="HOGENOM" id="CLU_016734_0_4_6"/>
<dbReference type="UniPathway" id="UPA00035">
    <property type="reaction ID" value="UER00044"/>
</dbReference>
<dbReference type="Proteomes" id="UP000000746">
    <property type="component" value="Chromosome"/>
</dbReference>
<dbReference type="GO" id="GO:0005829">
    <property type="term" value="C:cytosol"/>
    <property type="evidence" value="ECO:0007669"/>
    <property type="project" value="TreeGrafter"/>
</dbReference>
<dbReference type="GO" id="GO:0004834">
    <property type="term" value="F:tryptophan synthase activity"/>
    <property type="evidence" value="ECO:0007669"/>
    <property type="project" value="UniProtKB-UniRule"/>
</dbReference>
<dbReference type="CDD" id="cd04724">
    <property type="entry name" value="Tryptophan_synthase_alpha"/>
    <property type="match status" value="1"/>
</dbReference>
<dbReference type="FunFam" id="3.20.20.70:FF:000037">
    <property type="entry name" value="Tryptophan synthase alpha chain"/>
    <property type="match status" value="1"/>
</dbReference>
<dbReference type="Gene3D" id="3.20.20.70">
    <property type="entry name" value="Aldolase class I"/>
    <property type="match status" value="1"/>
</dbReference>
<dbReference type="HAMAP" id="MF_00131">
    <property type="entry name" value="Trp_synth_alpha"/>
    <property type="match status" value="1"/>
</dbReference>
<dbReference type="InterPro" id="IPR013785">
    <property type="entry name" value="Aldolase_TIM"/>
</dbReference>
<dbReference type="InterPro" id="IPR011060">
    <property type="entry name" value="RibuloseP-bd_barrel"/>
</dbReference>
<dbReference type="InterPro" id="IPR018204">
    <property type="entry name" value="Trp_synthase_alpha_AS"/>
</dbReference>
<dbReference type="InterPro" id="IPR002028">
    <property type="entry name" value="Trp_synthase_suA"/>
</dbReference>
<dbReference type="NCBIfam" id="TIGR00262">
    <property type="entry name" value="trpA"/>
    <property type="match status" value="1"/>
</dbReference>
<dbReference type="PANTHER" id="PTHR43406:SF1">
    <property type="entry name" value="TRYPTOPHAN SYNTHASE ALPHA CHAIN, CHLOROPLASTIC"/>
    <property type="match status" value="1"/>
</dbReference>
<dbReference type="PANTHER" id="PTHR43406">
    <property type="entry name" value="TRYPTOPHAN SYNTHASE, ALPHA CHAIN"/>
    <property type="match status" value="1"/>
</dbReference>
<dbReference type="Pfam" id="PF00290">
    <property type="entry name" value="Trp_syntA"/>
    <property type="match status" value="1"/>
</dbReference>
<dbReference type="SUPFAM" id="SSF51366">
    <property type="entry name" value="Ribulose-phoshate binding barrel"/>
    <property type="match status" value="1"/>
</dbReference>
<dbReference type="PROSITE" id="PS00167">
    <property type="entry name" value="TRP_SYNTHASE_ALPHA"/>
    <property type="match status" value="1"/>
</dbReference>
<feature type="chain" id="PRO_1000198711" description="Tryptophan synthase alpha chain">
    <location>
        <begin position="1"/>
        <end position="268"/>
    </location>
</feature>
<feature type="active site" description="Proton acceptor" evidence="1">
    <location>
        <position position="49"/>
    </location>
</feature>
<feature type="active site" description="Proton acceptor" evidence="1">
    <location>
        <position position="60"/>
    </location>
</feature>
<comment type="function">
    <text evidence="1">The alpha subunit is responsible for the aldol cleavage of indoleglycerol phosphate to indole and glyceraldehyde 3-phosphate.</text>
</comment>
<comment type="catalytic activity">
    <reaction evidence="1">
        <text>(1S,2R)-1-C-(indol-3-yl)glycerol 3-phosphate + L-serine = D-glyceraldehyde 3-phosphate + L-tryptophan + H2O</text>
        <dbReference type="Rhea" id="RHEA:10532"/>
        <dbReference type="ChEBI" id="CHEBI:15377"/>
        <dbReference type="ChEBI" id="CHEBI:33384"/>
        <dbReference type="ChEBI" id="CHEBI:57912"/>
        <dbReference type="ChEBI" id="CHEBI:58866"/>
        <dbReference type="ChEBI" id="CHEBI:59776"/>
        <dbReference type="EC" id="4.2.1.20"/>
    </reaction>
</comment>
<comment type="pathway">
    <text evidence="1">Amino-acid biosynthesis; L-tryptophan biosynthesis; L-tryptophan from chorismate: step 5/5.</text>
</comment>
<comment type="subunit">
    <text evidence="1">Tetramer of two alpha and two beta chains.</text>
</comment>
<comment type="similarity">
    <text evidence="1">Belongs to the TrpA family.</text>
</comment>
<protein>
    <recommendedName>
        <fullName evidence="1">Tryptophan synthase alpha chain</fullName>
        <ecNumber evidence="1">4.2.1.20</ecNumber>
    </recommendedName>
</protein>
<evidence type="ECO:0000255" key="1">
    <source>
        <dbReference type="HAMAP-Rule" id="MF_00131"/>
    </source>
</evidence>
<sequence>MERYESLFAQLKERKEGAFVPFVTLGDPGIEQSLKIIDTLIEAGADALELGIPFSDPLADGPTIQNATLRAFAAGVTPAQCFEMLALIRQKHPTIPIGLLMYANLVFNKGIDEFYAQCEKVGVDSVLVADVPVEESAPFRQAALRHNVAPIFICPPNADDDLLRQIASYGRGYTYLLSRAGVTGAENRAALPLNHLVAKLKEYNAAPPLQGFGISAPDQVKAAIDAGAAGAISGSAIVKIIEQHINEPEKMLVALKVFVQPMKAATRS</sequence>
<organism>
    <name type="scientific">Escherichia coli (strain 55989 / EAEC)</name>
    <dbReference type="NCBI Taxonomy" id="585055"/>
    <lineage>
        <taxon>Bacteria</taxon>
        <taxon>Pseudomonadati</taxon>
        <taxon>Pseudomonadota</taxon>
        <taxon>Gammaproteobacteria</taxon>
        <taxon>Enterobacterales</taxon>
        <taxon>Enterobacteriaceae</taxon>
        <taxon>Escherichia</taxon>
    </lineage>
</organism>
<accession>B7L492</accession>
<name>TRPA_ECO55</name>